<proteinExistence type="inferred from homology"/>
<evidence type="ECO:0000255" key="1">
    <source>
        <dbReference type="HAMAP-Rule" id="MF_00332"/>
    </source>
</evidence>
<evidence type="ECO:0000256" key="2">
    <source>
        <dbReference type="SAM" id="MobiDB-lite"/>
    </source>
</evidence>
<dbReference type="EMBL" id="CP000485">
    <property type="protein sequence ID" value="ABK87126.1"/>
    <property type="molecule type" value="Genomic_DNA"/>
</dbReference>
<dbReference type="RefSeq" id="WP_000034699.1">
    <property type="nucleotide sequence ID" value="NC_008600.1"/>
</dbReference>
<dbReference type="SMR" id="A0RIT3"/>
<dbReference type="GeneID" id="45024191"/>
<dbReference type="KEGG" id="btl:BALH_3904"/>
<dbReference type="HOGENOM" id="CLU_005965_2_4_9"/>
<dbReference type="GO" id="GO:0005524">
    <property type="term" value="F:ATP binding"/>
    <property type="evidence" value="ECO:0007669"/>
    <property type="project" value="UniProtKB-UniRule"/>
</dbReference>
<dbReference type="GO" id="GO:0140662">
    <property type="term" value="F:ATP-dependent protein folding chaperone"/>
    <property type="evidence" value="ECO:0007669"/>
    <property type="project" value="InterPro"/>
</dbReference>
<dbReference type="GO" id="GO:0051082">
    <property type="term" value="F:unfolded protein binding"/>
    <property type="evidence" value="ECO:0007669"/>
    <property type="project" value="InterPro"/>
</dbReference>
<dbReference type="CDD" id="cd10234">
    <property type="entry name" value="ASKHA_NBD_HSP70_DnaK-like"/>
    <property type="match status" value="1"/>
</dbReference>
<dbReference type="FunFam" id="2.60.34.10:FF:000014">
    <property type="entry name" value="Chaperone protein DnaK HSP70"/>
    <property type="match status" value="1"/>
</dbReference>
<dbReference type="FunFam" id="1.20.1270.10:FF:000004">
    <property type="entry name" value="Molecular chaperone DnaK"/>
    <property type="match status" value="1"/>
</dbReference>
<dbReference type="FunFam" id="3.30.420.40:FF:000071">
    <property type="entry name" value="Molecular chaperone DnaK"/>
    <property type="match status" value="1"/>
</dbReference>
<dbReference type="FunFam" id="3.90.640.10:FF:000003">
    <property type="entry name" value="Molecular chaperone DnaK"/>
    <property type="match status" value="1"/>
</dbReference>
<dbReference type="Gene3D" id="1.20.1270.10">
    <property type="match status" value="1"/>
</dbReference>
<dbReference type="Gene3D" id="3.30.420.40">
    <property type="match status" value="2"/>
</dbReference>
<dbReference type="Gene3D" id="3.90.640.10">
    <property type="entry name" value="Actin, Chain A, domain 4"/>
    <property type="match status" value="1"/>
</dbReference>
<dbReference type="Gene3D" id="2.60.34.10">
    <property type="entry name" value="Substrate Binding Domain Of DNAk, Chain A, domain 1"/>
    <property type="match status" value="1"/>
</dbReference>
<dbReference type="HAMAP" id="MF_00332">
    <property type="entry name" value="DnaK"/>
    <property type="match status" value="1"/>
</dbReference>
<dbReference type="InterPro" id="IPR043129">
    <property type="entry name" value="ATPase_NBD"/>
</dbReference>
<dbReference type="InterPro" id="IPR012725">
    <property type="entry name" value="Chaperone_DnaK"/>
</dbReference>
<dbReference type="InterPro" id="IPR018181">
    <property type="entry name" value="Heat_shock_70_CS"/>
</dbReference>
<dbReference type="InterPro" id="IPR029048">
    <property type="entry name" value="HSP70_C_sf"/>
</dbReference>
<dbReference type="InterPro" id="IPR029047">
    <property type="entry name" value="HSP70_peptide-bd_sf"/>
</dbReference>
<dbReference type="InterPro" id="IPR013126">
    <property type="entry name" value="Hsp_70_fam"/>
</dbReference>
<dbReference type="NCBIfam" id="NF001413">
    <property type="entry name" value="PRK00290.1"/>
    <property type="match status" value="1"/>
</dbReference>
<dbReference type="NCBIfam" id="TIGR02350">
    <property type="entry name" value="prok_dnaK"/>
    <property type="match status" value="1"/>
</dbReference>
<dbReference type="PANTHER" id="PTHR19375">
    <property type="entry name" value="HEAT SHOCK PROTEIN 70KDA"/>
    <property type="match status" value="1"/>
</dbReference>
<dbReference type="Pfam" id="PF00012">
    <property type="entry name" value="HSP70"/>
    <property type="match status" value="1"/>
</dbReference>
<dbReference type="PRINTS" id="PR00301">
    <property type="entry name" value="HEATSHOCK70"/>
</dbReference>
<dbReference type="SUPFAM" id="SSF53067">
    <property type="entry name" value="Actin-like ATPase domain"/>
    <property type="match status" value="2"/>
</dbReference>
<dbReference type="SUPFAM" id="SSF100934">
    <property type="entry name" value="Heat shock protein 70kD (HSP70), C-terminal subdomain"/>
    <property type="match status" value="1"/>
</dbReference>
<dbReference type="SUPFAM" id="SSF100920">
    <property type="entry name" value="Heat shock protein 70kD (HSP70), peptide-binding domain"/>
    <property type="match status" value="1"/>
</dbReference>
<dbReference type="PROSITE" id="PS00297">
    <property type="entry name" value="HSP70_1"/>
    <property type="match status" value="1"/>
</dbReference>
<dbReference type="PROSITE" id="PS00329">
    <property type="entry name" value="HSP70_2"/>
    <property type="match status" value="1"/>
</dbReference>
<dbReference type="PROSITE" id="PS01036">
    <property type="entry name" value="HSP70_3"/>
    <property type="match status" value="1"/>
</dbReference>
<reference key="1">
    <citation type="journal article" date="2007" name="J. Bacteriol.">
        <title>The complete genome sequence of Bacillus thuringiensis Al Hakam.</title>
        <authorList>
            <person name="Challacombe J.F."/>
            <person name="Altherr M.R."/>
            <person name="Xie G."/>
            <person name="Bhotika S.S."/>
            <person name="Brown N."/>
            <person name="Bruce D."/>
            <person name="Campbell C.S."/>
            <person name="Campbell M.L."/>
            <person name="Chen J."/>
            <person name="Chertkov O."/>
            <person name="Cleland C."/>
            <person name="Dimitrijevic M."/>
            <person name="Doggett N.A."/>
            <person name="Fawcett J.J."/>
            <person name="Glavina T."/>
            <person name="Goodwin L.A."/>
            <person name="Green L.D."/>
            <person name="Han C.S."/>
            <person name="Hill K.K."/>
            <person name="Hitchcock P."/>
            <person name="Jackson P.J."/>
            <person name="Keim P."/>
            <person name="Kewalramani A.R."/>
            <person name="Longmire J."/>
            <person name="Lucas S."/>
            <person name="Malfatti S."/>
            <person name="Martinez D."/>
            <person name="McMurry K."/>
            <person name="Meincke L.J."/>
            <person name="Misra M."/>
            <person name="Moseman B.L."/>
            <person name="Mundt M."/>
            <person name="Munk A.C."/>
            <person name="Okinaka R.T."/>
            <person name="Parson-Quintana B."/>
            <person name="Reilly L.P."/>
            <person name="Richardson P."/>
            <person name="Robinson D.L."/>
            <person name="Saunders E."/>
            <person name="Tapia R."/>
            <person name="Tesmer J.G."/>
            <person name="Thayer N."/>
            <person name="Thompson L.S."/>
            <person name="Tice H."/>
            <person name="Ticknor L.O."/>
            <person name="Wills P.L."/>
            <person name="Gilna P."/>
            <person name="Brettin T.S."/>
        </authorList>
    </citation>
    <scope>NUCLEOTIDE SEQUENCE [LARGE SCALE GENOMIC DNA]</scope>
    <source>
        <strain>Al Hakam</strain>
    </source>
</reference>
<name>DNAK_BACAH</name>
<accession>A0RIT3</accession>
<feature type="chain" id="PRO_1000059509" description="Chaperone protein DnaK">
    <location>
        <begin position="1"/>
        <end position="611"/>
    </location>
</feature>
<feature type="region of interest" description="Disordered" evidence="2">
    <location>
        <begin position="577"/>
        <end position="598"/>
    </location>
</feature>
<feature type="compositionally biased region" description="Low complexity" evidence="2">
    <location>
        <begin position="577"/>
        <end position="592"/>
    </location>
</feature>
<feature type="modified residue" description="Phosphothreonine; by autocatalysis" evidence="1">
    <location>
        <position position="173"/>
    </location>
</feature>
<comment type="function">
    <text evidence="1">Acts as a chaperone.</text>
</comment>
<comment type="induction">
    <text evidence="1">By stress conditions e.g. heat shock.</text>
</comment>
<comment type="similarity">
    <text evidence="1">Belongs to the heat shock protein 70 family.</text>
</comment>
<keyword id="KW-0067">ATP-binding</keyword>
<keyword id="KW-0143">Chaperone</keyword>
<keyword id="KW-0547">Nucleotide-binding</keyword>
<keyword id="KW-0597">Phosphoprotein</keyword>
<keyword id="KW-0346">Stress response</keyword>
<gene>
    <name evidence="1" type="primary">dnaK</name>
    <name type="ordered locus">BALH_3904</name>
</gene>
<organism>
    <name type="scientific">Bacillus thuringiensis (strain Al Hakam)</name>
    <dbReference type="NCBI Taxonomy" id="412694"/>
    <lineage>
        <taxon>Bacteria</taxon>
        <taxon>Bacillati</taxon>
        <taxon>Bacillota</taxon>
        <taxon>Bacilli</taxon>
        <taxon>Bacillales</taxon>
        <taxon>Bacillaceae</taxon>
        <taxon>Bacillus</taxon>
        <taxon>Bacillus cereus group</taxon>
    </lineage>
</organism>
<sequence>MSKIIGIDLGTTNSCVAVMEGGEPKVIPNPEGNRTTPSVVAFKNEERQVGEVAKRQAITNPNTIMSVKRHMGTDYKVEVEGKDYTPQEISAIILQNLKASAEAYLGETVTKAVITVPAYFNDAERQATKDAGRIAGLEVERIINEPTAAALAYGLEKQDEEQKILVYDLGGGTFDVSILELADGTFEVISTAGDNRLGGDDFDQVIIDHLVAEFKKENNIDLSQDKMALQRLKDAAEKAKKDLSGVTQTQISLPFISAGAAGPLHLELTLTRAKFEELSAGLVERTLEPTRRALKDAGFAPSELDKVILVGGSTRIPAVQEAIKRETGKEPYKGVNPDEVVALGAAVQGGVLTGDVEGVLLLDVTPLSLGIETMGGVFTKLIERNTTIPTSKSQVFSTAADNQPAVDIHVLQGERPMSADNKTLGRFQLTDLPPAPRGIPQIEVTFDIDANGIVNVRAKDLGTSKEQAITIQSSSGLSDEEVERMVQEAEANADADQKRKEEVELRNEADQLVFQTDKVVKDLEGKVDAAEVAKATEAKEALQAAIEKNELEEIRAKKDALQEIVQQLTVKLYEQAQAAAGQAEGAEGAQDAGAKKDNVVDAEFEEVKEDK</sequence>
<protein>
    <recommendedName>
        <fullName evidence="1">Chaperone protein DnaK</fullName>
    </recommendedName>
    <alternativeName>
        <fullName evidence="1">HSP70</fullName>
    </alternativeName>
    <alternativeName>
        <fullName evidence="1">Heat shock 70 kDa protein</fullName>
    </alternativeName>
    <alternativeName>
        <fullName evidence="1">Heat shock protein 70</fullName>
    </alternativeName>
</protein>